<proteinExistence type="evidence at protein level"/>
<reference key="1">
    <citation type="journal article" date="2004" name="Proc. Natl. Acad. Sci. U.S.A.">
        <title>The diploid genome sequence of Candida albicans.</title>
        <authorList>
            <person name="Jones T."/>
            <person name="Federspiel N.A."/>
            <person name="Chibana H."/>
            <person name="Dungan J."/>
            <person name="Kalman S."/>
            <person name="Magee B.B."/>
            <person name="Newport G."/>
            <person name="Thorstenson Y.R."/>
            <person name="Agabian N."/>
            <person name="Magee P.T."/>
            <person name="Davis R.W."/>
            <person name="Scherer S."/>
        </authorList>
    </citation>
    <scope>NUCLEOTIDE SEQUENCE [LARGE SCALE GENOMIC DNA]</scope>
    <source>
        <strain>SC5314 / ATCC MYA-2876</strain>
    </source>
</reference>
<reference key="2">
    <citation type="journal article" date="2007" name="Genome Biol.">
        <title>Assembly of the Candida albicans genome into sixteen supercontigs aligned on the eight chromosomes.</title>
        <authorList>
            <person name="van het Hoog M."/>
            <person name="Rast T.J."/>
            <person name="Martchenko M."/>
            <person name="Grindle S."/>
            <person name="Dignard D."/>
            <person name="Hogues H."/>
            <person name="Cuomo C."/>
            <person name="Berriman M."/>
            <person name="Scherer S."/>
            <person name="Magee B.B."/>
            <person name="Whiteway M."/>
            <person name="Chibana H."/>
            <person name="Nantel A."/>
            <person name="Magee P.T."/>
        </authorList>
    </citation>
    <scope>GENOME REANNOTATION</scope>
    <source>
        <strain>SC5314 / ATCC MYA-2876</strain>
    </source>
</reference>
<reference key="3">
    <citation type="journal article" date="2013" name="Genome Biol.">
        <title>Assembly of a phased diploid Candida albicans genome facilitates allele-specific measurements and provides a simple model for repeat and indel structure.</title>
        <authorList>
            <person name="Muzzey D."/>
            <person name="Schwartz K."/>
            <person name="Weissman J.S."/>
            <person name="Sherlock G."/>
        </authorList>
    </citation>
    <scope>NUCLEOTIDE SEQUENCE [LARGE SCALE GENOMIC DNA]</scope>
    <scope>GENOME REANNOTATION</scope>
    <source>
        <strain>SC5314 / ATCC MYA-2876</strain>
    </source>
</reference>
<reference key="4">
    <citation type="journal article" date="2003" name="Yeast">
        <title>Genome-wide identification of fungal GPI proteins.</title>
        <authorList>
            <person name="De Groot P.W."/>
            <person name="Hellingwerf K.J."/>
            <person name="Klis F.M."/>
        </authorList>
    </citation>
    <scope>PREDICTION OF GPI-ANCHOR</scope>
</reference>
<reference key="5">
    <citation type="journal article" date="2011" name="BMC Genomics">
        <title>FungalRV: adhesin prediction and immunoinformatics portal for human fungal pathogens.</title>
        <authorList>
            <person name="Chaudhuri R."/>
            <person name="Ansari F.A."/>
            <person name="Raghunandanan M.V."/>
            <person name="Ramachandran S."/>
        </authorList>
    </citation>
    <scope>FUNCTION</scope>
</reference>
<reference key="6">
    <citation type="journal article" date="2013" name="Antimicrob. Agents Chemother.">
        <title>Milbemycins: more than efflux inhibitors for fungal pathogens.</title>
        <authorList>
            <person name="Silva L.V."/>
            <person name="Sanguinetti M."/>
            <person name="Vandeputte P."/>
            <person name="Torelli R."/>
            <person name="Rochat B."/>
            <person name="Sanglard D."/>
        </authorList>
    </citation>
    <scope>INDUCTION</scope>
</reference>
<evidence type="ECO:0000250" key="1"/>
<evidence type="ECO:0000255" key="2"/>
<evidence type="ECO:0000269" key="3">
    <source>
    </source>
</evidence>
<evidence type="ECO:0000269" key="4">
    <source>
    </source>
</evidence>
<evidence type="ECO:0000305" key="5"/>
<gene>
    <name type="primary">PGA22</name>
    <name type="ordered locus">CAALFM_CR02290WA</name>
    <name type="ORF">CaO19.11223</name>
    <name type="ORF">CaO19.3738</name>
</gene>
<feature type="signal peptide" evidence="2">
    <location>
        <begin position="1"/>
        <end position="18"/>
    </location>
</feature>
<feature type="chain" id="PRO_0000424925" description="Probable GPI-anchored adhesin-like protein PGA22">
    <location>
        <begin position="19"/>
        <end position="140"/>
    </location>
</feature>
<feature type="propeptide" id="PRO_0000424926" description="Removed in mature form" evidence="2">
    <location>
        <begin position="141"/>
        <end position="169"/>
    </location>
</feature>
<feature type="lipid moiety-binding region" description="GPI-anchor amidated glycine" evidence="2">
    <location>
        <position position="140"/>
    </location>
</feature>
<feature type="glycosylation site" description="N-linked (GlcNAc...) asparagine" evidence="2">
    <location>
        <position position="87"/>
    </location>
</feature>
<feature type="glycosylation site" description="N-linked (GlcNAc...) asparagine" evidence="2">
    <location>
        <position position="104"/>
    </location>
</feature>
<feature type="glycosylation site" description="N-linked (GlcNAc...) asparagine" evidence="2">
    <location>
        <position position="111"/>
    </location>
</feature>
<feature type="glycosylation site" description="N-linked (GlcNAc...) asparagine" evidence="2">
    <location>
        <position position="118"/>
    </location>
</feature>
<comment type="function">
    <text evidence="1 3">Putative adhesin which may be involved in cell adhesion and virulence.</text>
</comment>
<comment type="subcellular location">
    <subcellularLocation>
        <location evidence="5">Cell membrane</location>
        <topology evidence="5">Lipid-anchor</topology>
        <topology evidence="5">GPI-anchor</topology>
    </subcellularLocation>
</comment>
<comment type="induction">
    <text evidence="4">Up-regulated upon milbemycins A3 oxim derivative (A3Ox) treatment.</text>
</comment>
<dbReference type="EMBL" id="CP017630">
    <property type="protein sequence ID" value="AOW30978.1"/>
    <property type="molecule type" value="Genomic_DNA"/>
</dbReference>
<dbReference type="RefSeq" id="XP_713426.1">
    <property type="nucleotide sequence ID" value="XM_708333.1"/>
</dbReference>
<dbReference type="SMR" id="Q59V02"/>
<dbReference type="STRING" id="237561.Q59V02"/>
<dbReference type="GlyCosmos" id="Q59V02">
    <property type="glycosylation" value="4 sites, No reported glycans"/>
</dbReference>
<dbReference type="EnsemblFungi" id="CR_02290W_A-T">
    <property type="protein sequence ID" value="CR_02290W_A-T-p1"/>
    <property type="gene ID" value="CR_02290W_A"/>
</dbReference>
<dbReference type="GeneID" id="3644939"/>
<dbReference type="KEGG" id="cal:CAALFM_CR02290WA"/>
<dbReference type="CGD" id="CAL0000188460">
    <property type="gene designation" value="PGA22"/>
</dbReference>
<dbReference type="VEuPathDB" id="FungiDB:CR_02290W_A"/>
<dbReference type="HOGENOM" id="CLU_1578297_0_0_1"/>
<dbReference type="InParanoid" id="Q59V02"/>
<dbReference type="PRO" id="PR:Q59V02"/>
<dbReference type="Proteomes" id="UP000000559">
    <property type="component" value="Chromosome R"/>
</dbReference>
<dbReference type="GO" id="GO:0005886">
    <property type="term" value="C:plasma membrane"/>
    <property type="evidence" value="ECO:0007669"/>
    <property type="project" value="UniProtKB-SubCell"/>
</dbReference>
<dbReference type="GO" id="GO:0098552">
    <property type="term" value="C:side of membrane"/>
    <property type="evidence" value="ECO:0007669"/>
    <property type="project" value="UniProtKB-KW"/>
</dbReference>
<dbReference type="GO" id="GO:0007155">
    <property type="term" value="P:cell adhesion"/>
    <property type="evidence" value="ECO:0007669"/>
    <property type="project" value="UniProtKB-KW"/>
</dbReference>
<sequence>MKYSTLAWLVIASYTVFAQDGTSVTGYTTTIVIPGSPPAGAGTAHGDTENTGTVHTTEHLTGTEETHTTGATPETTTIVAPTTTHENTTTHETSVENTATVHHNTTTLHHNTTTIHPNATGTETHTETGTGTLTGTGTEGPALTTTTVAEAFSLAAGASLGYLVALLFL</sequence>
<organism>
    <name type="scientific">Candida albicans (strain SC5314 / ATCC MYA-2876)</name>
    <name type="common">Yeast</name>
    <dbReference type="NCBI Taxonomy" id="237561"/>
    <lineage>
        <taxon>Eukaryota</taxon>
        <taxon>Fungi</taxon>
        <taxon>Dikarya</taxon>
        <taxon>Ascomycota</taxon>
        <taxon>Saccharomycotina</taxon>
        <taxon>Pichiomycetes</taxon>
        <taxon>Debaryomycetaceae</taxon>
        <taxon>Candida/Lodderomyces clade</taxon>
        <taxon>Candida</taxon>
    </lineage>
</organism>
<name>PGA22_CANAL</name>
<protein>
    <recommendedName>
        <fullName>Probable GPI-anchored adhesin-like protein PGA22</fullName>
    </recommendedName>
    <alternativeName>
        <fullName>Predicted GPI-anchored protein 22</fullName>
    </alternativeName>
</protein>
<accession>Q59V02</accession>
<accession>A0A1D8PS64</accession>
<keyword id="KW-0130">Cell adhesion</keyword>
<keyword id="KW-1003">Cell membrane</keyword>
<keyword id="KW-0325">Glycoprotein</keyword>
<keyword id="KW-0336">GPI-anchor</keyword>
<keyword id="KW-0449">Lipoprotein</keyword>
<keyword id="KW-0472">Membrane</keyword>
<keyword id="KW-1185">Reference proteome</keyword>
<keyword id="KW-0732">Signal</keyword>
<keyword id="KW-0843">Virulence</keyword>